<feature type="chain" id="PRO_0000082921" description="Methionyl-tRNA formyltransferase">
    <location>
        <begin position="1"/>
        <end position="309"/>
    </location>
</feature>
<feature type="binding site" evidence="1">
    <location>
        <begin position="112"/>
        <end position="115"/>
    </location>
    <ligand>
        <name>(6S)-5,6,7,8-tetrahydrofolate</name>
        <dbReference type="ChEBI" id="CHEBI:57453"/>
    </ligand>
</feature>
<accession>Q6G1G8</accession>
<comment type="function">
    <text evidence="1">Attaches a formyl group to the free amino group of methionyl-tRNA(fMet). The formyl group appears to play a dual role in the initiator identity of N-formylmethionyl-tRNA by promoting its recognition by IF2 and preventing the misappropriation of this tRNA by the elongation apparatus.</text>
</comment>
<comment type="catalytic activity">
    <reaction evidence="1">
        <text>L-methionyl-tRNA(fMet) + (6R)-10-formyltetrahydrofolate = N-formyl-L-methionyl-tRNA(fMet) + (6S)-5,6,7,8-tetrahydrofolate + H(+)</text>
        <dbReference type="Rhea" id="RHEA:24380"/>
        <dbReference type="Rhea" id="RHEA-COMP:9952"/>
        <dbReference type="Rhea" id="RHEA-COMP:9953"/>
        <dbReference type="ChEBI" id="CHEBI:15378"/>
        <dbReference type="ChEBI" id="CHEBI:57453"/>
        <dbReference type="ChEBI" id="CHEBI:78530"/>
        <dbReference type="ChEBI" id="CHEBI:78844"/>
        <dbReference type="ChEBI" id="CHEBI:195366"/>
        <dbReference type="EC" id="2.1.2.9"/>
    </reaction>
</comment>
<comment type="similarity">
    <text evidence="1">Belongs to the Fmt family.</text>
</comment>
<dbReference type="EC" id="2.1.2.9" evidence="1"/>
<dbReference type="EMBL" id="BX897700">
    <property type="protein sequence ID" value="CAF25575.1"/>
    <property type="molecule type" value="Genomic_DNA"/>
</dbReference>
<dbReference type="RefSeq" id="WP_011178902.1">
    <property type="nucleotide sequence ID" value="NC_005955.1"/>
</dbReference>
<dbReference type="SMR" id="Q6G1G8"/>
<dbReference type="KEGG" id="bqu:BQ00680"/>
<dbReference type="eggNOG" id="COG0223">
    <property type="taxonomic scope" value="Bacteria"/>
</dbReference>
<dbReference type="HOGENOM" id="CLU_033347_1_2_5"/>
<dbReference type="OrthoDB" id="9802815at2"/>
<dbReference type="Proteomes" id="UP000000597">
    <property type="component" value="Chromosome"/>
</dbReference>
<dbReference type="GO" id="GO:0005829">
    <property type="term" value="C:cytosol"/>
    <property type="evidence" value="ECO:0007669"/>
    <property type="project" value="TreeGrafter"/>
</dbReference>
<dbReference type="GO" id="GO:0004479">
    <property type="term" value="F:methionyl-tRNA formyltransferase activity"/>
    <property type="evidence" value="ECO:0007669"/>
    <property type="project" value="UniProtKB-UniRule"/>
</dbReference>
<dbReference type="CDD" id="cd08646">
    <property type="entry name" value="FMT_core_Met-tRNA-FMT_N"/>
    <property type="match status" value="1"/>
</dbReference>
<dbReference type="CDD" id="cd08704">
    <property type="entry name" value="Met_tRNA_FMT_C"/>
    <property type="match status" value="1"/>
</dbReference>
<dbReference type="Gene3D" id="3.40.50.12230">
    <property type="match status" value="1"/>
</dbReference>
<dbReference type="HAMAP" id="MF_00182">
    <property type="entry name" value="Formyl_trans"/>
    <property type="match status" value="1"/>
</dbReference>
<dbReference type="InterPro" id="IPR005794">
    <property type="entry name" value="Fmt"/>
</dbReference>
<dbReference type="InterPro" id="IPR005793">
    <property type="entry name" value="Formyl_trans_C"/>
</dbReference>
<dbReference type="InterPro" id="IPR002376">
    <property type="entry name" value="Formyl_transf_N"/>
</dbReference>
<dbReference type="InterPro" id="IPR036477">
    <property type="entry name" value="Formyl_transf_N_sf"/>
</dbReference>
<dbReference type="InterPro" id="IPR011034">
    <property type="entry name" value="Formyl_transferase-like_C_sf"/>
</dbReference>
<dbReference type="InterPro" id="IPR001555">
    <property type="entry name" value="GART_AS"/>
</dbReference>
<dbReference type="InterPro" id="IPR044135">
    <property type="entry name" value="Met-tRNA-FMT_C"/>
</dbReference>
<dbReference type="InterPro" id="IPR041711">
    <property type="entry name" value="Met-tRNA-FMT_N"/>
</dbReference>
<dbReference type="NCBIfam" id="TIGR00460">
    <property type="entry name" value="fmt"/>
    <property type="match status" value="1"/>
</dbReference>
<dbReference type="PANTHER" id="PTHR11138">
    <property type="entry name" value="METHIONYL-TRNA FORMYLTRANSFERASE"/>
    <property type="match status" value="1"/>
</dbReference>
<dbReference type="PANTHER" id="PTHR11138:SF5">
    <property type="entry name" value="METHIONYL-TRNA FORMYLTRANSFERASE, MITOCHONDRIAL"/>
    <property type="match status" value="1"/>
</dbReference>
<dbReference type="Pfam" id="PF02911">
    <property type="entry name" value="Formyl_trans_C"/>
    <property type="match status" value="1"/>
</dbReference>
<dbReference type="Pfam" id="PF00551">
    <property type="entry name" value="Formyl_trans_N"/>
    <property type="match status" value="1"/>
</dbReference>
<dbReference type="SUPFAM" id="SSF50486">
    <property type="entry name" value="FMT C-terminal domain-like"/>
    <property type="match status" value="1"/>
</dbReference>
<dbReference type="SUPFAM" id="SSF53328">
    <property type="entry name" value="Formyltransferase"/>
    <property type="match status" value="1"/>
</dbReference>
<dbReference type="PROSITE" id="PS00373">
    <property type="entry name" value="GART"/>
    <property type="match status" value="1"/>
</dbReference>
<evidence type="ECO:0000255" key="1">
    <source>
        <dbReference type="HAMAP-Rule" id="MF_00182"/>
    </source>
</evidence>
<gene>
    <name evidence="1" type="primary">fmt</name>
    <name type="ordered locus">BQ00680</name>
</gene>
<proteinExistence type="inferred from homology"/>
<name>FMT_BARQU</name>
<protein>
    <recommendedName>
        <fullName evidence="1">Methionyl-tRNA formyltransferase</fullName>
        <ecNumber evidence="1">2.1.2.9</ecNumber>
    </recommendedName>
</protein>
<reference key="1">
    <citation type="journal article" date="2004" name="Proc. Natl. Acad. Sci. U.S.A.">
        <title>The louse-borne human pathogen Bartonella quintana is a genomic derivative of the zoonotic agent Bartonella henselae.</title>
        <authorList>
            <person name="Alsmark U.C.M."/>
            <person name="Frank A.C."/>
            <person name="Karlberg E.O."/>
            <person name="Legault B.-A."/>
            <person name="Ardell D.H."/>
            <person name="Canbaeck B."/>
            <person name="Eriksson A.-S."/>
            <person name="Naeslund A.K."/>
            <person name="Handley S.A."/>
            <person name="Huvet M."/>
            <person name="La Scola B."/>
            <person name="Holmberg M."/>
            <person name="Andersson S.G.E."/>
        </authorList>
    </citation>
    <scope>NUCLEOTIDE SEQUENCE [LARGE SCALE GENOMIC DNA]</scope>
    <source>
        <strain>Toulouse</strain>
    </source>
</reference>
<keyword id="KW-0648">Protein biosynthesis</keyword>
<keyword id="KW-0808">Transferase</keyword>
<sequence>MGLRLSFMGTPHFSVPILHALLDAGHDIVAVYSQPPRPAGRRGLKMIPSPVQNAAQAKSIPVFTPQTLKTAEKQAQFAELAVDVAIVVAYGLFLPKAILETPRLGCFNAHASLLPRWRGAAPIQRAIMAGDKETGMMIMKMDEGLDTGSIALSRSIPITDNTTADELSNKLSHIGAELMIEMLSTLEKGQLKLTPQSGENITYASKIKKEETRIDWTKPAEFIHRQIRALSPFPGCWCNMNIAGREERVKILGSRLTKGPSREIGWIEPNSLIIHCGQGRIEITSLQKSGGKILDSAAFLRGARLSTVF</sequence>
<organism>
    <name type="scientific">Bartonella quintana (strain Toulouse)</name>
    <name type="common">Rochalimaea quintana</name>
    <dbReference type="NCBI Taxonomy" id="283165"/>
    <lineage>
        <taxon>Bacteria</taxon>
        <taxon>Pseudomonadati</taxon>
        <taxon>Pseudomonadota</taxon>
        <taxon>Alphaproteobacteria</taxon>
        <taxon>Hyphomicrobiales</taxon>
        <taxon>Bartonellaceae</taxon>
        <taxon>Bartonella</taxon>
    </lineage>
</organism>